<proteinExistence type="inferred from homology"/>
<accession>Q8K900</accession>
<comment type="function">
    <text evidence="1">Involved in iron-sulfur (Fe-S) cluster assembly. May act as a regulator of Fe-S biogenesis.</text>
</comment>
<comment type="similarity">
    <text evidence="1">Belongs to the frataxin family.</text>
</comment>
<feature type="chain" id="PRO_0000193931" description="Iron-sulfur cluster assembly protein CyaY">
    <location>
        <begin position="1"/>
        <end position="121"/>
    </location>
</feature>
<sequence>MKKNTNFTQINNNFYRLVDDLFLKIEDNLNFYDDKIDIDYEVQDYVMTITFLNKSIIVVNKQESLRQIWLATKFNAYHFNYKIDKWICNRSNKDFWEIFEKSCSIQSNENLIFTAFKRIKK</sequence>
<reference key="1">
    <citation type="journal article" date="2002" name="Science">
        <title>50 million years of genomic stasis in endosymbiotic bacteria.</title>
        <authorList>
            <person name="Tamas I."/>
            <person name="Klasson L."/>
            <person name="Canbaeck B."/>
            <person name="Naeslund A.K."/>
            <person name="Eriksson A.-S."/>
            <person name="Wernegreen J.J."/>
            <person name="Sandstroem J.P."/>
            <person name="Moran N.A."/>
            <person name="Andersson S.G.E."/>
        </authorList>
    </citation>
    <scope>NUCLEOTIDE SEQUENCE [LARGE SCALE GENOMIC DNA]</scope>
    <source>
        <strain>Sg</strain>
    </source>
</reference>
<evidence type="ECO:0000255" key="1">
    <source>
        <dbReference type="HAMAP-Rule" id="MF_00142"/>
    </source>
</evidence>
<keyword id="KW-0408">Iron</keyword>
<keyword id="KW-0479">Metal-binding</keyword>
<dbReference type="EMBL" id="AE013218">
    <property type="protein sequence ID" value="AAM68105.1"/>
    <property type="molecule type" value="Genomic_DNA"/>
</dbReference>
<dbReference type="RefSeq" id="WP_011054071.1">
    <property type="nucleotide sequence ID" value="NC_004061.1"/>
</dbReference>
<dbReference type="SMR" id="Q8K900"/>
<dbReference type="STRING" id="198804.BUsg_569"/>
<dbReference type="GeneID" id="93004047"/>
<dbReference type="KEGG" id="bas:BUsg_569"/>
<dbReference type="eggNOG" id="COG1965">
    <property type="taxonomic scope" value="Bacteria"/>
</dbReference>
<dbReference type="HOGENOM" id="CLU_080880_3_0_6"/>
<dbReference type="Proteomes" id="UP000000416">
    <property type="component" value="Chromosome"/>
</dbReference>
<dbReference type="GO" id="GO:0005829">
    <property type="term" value="C:cytosol"/>
    <property type="evidence" value="ECO:0007669"/>
    <property type="project" value="TreeGrafter"/>
</dbReference>
<dbReference type="GO" id="GO:0008199">
    <property type="term" value="F:ferric iron binding"/>
    <property type="evidence" value="ECO:0007669"/>
    <property type="project" value="InterPro"/>
</dbReference>
<dbReference type="GO" id="GO:0008198">
    <property type="term" value="F:ferrous iron binding"/>
    <property type="evidence" value="ECO:0007669"/>
    <property type="project" value="TreeGrafter"/>
</dbReference>
<dbReference type="GO" id="GO:0016226">
    <property type="term" value="P:iron-sulfur cluster assembly"/>
    <property type="evidence" value="ECO:0007669"/>
    <property type="project" value="UniProtKB-UniRule"/>
</dbReference>
<dbReference type="CDD" id="cd00503">
    <property type="entry name" value="Frataxin"/>
    <property type="match status" value="1"/>
</dbReference>
<dbReference type="Gene3D" id="3.30.920.10">
    <property type="entry name" value="Frataxin/CyaY"/>
    <property type="match status" value="1"/>
</dbReference>
<dbReference type="HAMAP" id="MF_00142">
    <property type="entry name" value="CyaY"/>
    <property type="match status" value="1"/>
</dbReference>
<dbReference type="InterPro" id="IPR047584">
    <property type="entry name" value="CyaY"/>
</dbReference>
<dbReference type="InterPro" id="IPR002908">
    <property type="entry name" value="Frataxin/CyaY"/>
</dbReference>
<dbReference type="InterPro" id="IPR036524">
    <property type="entry name" value="Frataxin/CyaY_sf"/>
</dbReference>
<dbReference type="InterPro" id="IPR020895">
    <property type="entry name" value="Frataxin_CS"/>
</dbReference>
<dbReference type="NCBIfam" id="TIGR03421">
    <property type="entry name" value="FeS_CyaY"/>
    <property type="match status" value="1"/>
</dbReference>
<dbReference type="PANTHER" id="PTHR16821">
    <property type="entry name" value="FRATAXIN"/>
    <property type="match status" value="1"/>
</dbReference>
<dbReference type="PANTHER" id="PTHR16821:SF2">
    <property type="entry name" value="FRATAXIN, MITOCHONDRIAL"/>
    <property type="match status" value="1"/>
</dbReference>
<dbReference type="Pfam" id="PF01491">
    <property type="entry name" value="Frataxin_Cyay"/>
    <property type="match status" value="1"/>
</dbReference>
<dbReference type="SMART" id="SM01219">
    <property type="entry name" value="Frataxin_Cyay"/>
    <property type="match status" value="1"/>
</dbReference>
<dbReference type="SUPFAM" id="SSF55387">
    <property type="entry name" value="Frataxin/Nqo15-like"/>
    <property type="match status" value="1"/>
</dbReference>
<dbReference type="PROSITE" id="PS01344">
    <property type="entry name" value="FRATAXIN_1"/>
    <property type="match status" value="1"/>
</dbReference>
<dbReference type="PROSITE" id="PS50810">
    <property type="entry name" value="FRATAXIN_2"/>
    <property type="match status" value="1"/>
</dbReference>
<name>CYAY_BUCAP</name>
<gene>
    <name evidence="1" type="primary">cyaY</name>
    <name type="ordered locus">BUsg_569</name>
</gene>
<organism>
    <name type="scientific">Buchnera aphidicola subsp. Schizaphis graminum (strain Sg)</name>
    <dbReference type="NCBI Taxonomy" id="198804"/>
    <lineage>
        <taxon>Bacteria</taxon>
        <taxon>Pseudomonadati</taxon>
        <taxon>Pseudomonadota</taxon>
        <taxon>Gammaproteobacteria</taxon>
        <taxon>Enterobacterales</taxon>
        <taxon>Erwiniaceae</taxon>
        <taxon>Buchnera</taxon>
    </lineage>
</organism>
<protein>
    <recommendedName>
        <fullName evidence="1">Iron-sulfur cluster assembly protein CyaY</fullName>
    </recommendedName>
</protein>